<evidence type="ECO:0000250" key="1">
    <source>
        <dbReference type="UniProtKB" id="P38523"/>
    </source>
</evidence>
<evidence type="ECO:0000250" key="2">
    <source>
        <dbReference type="UniProtKB" id="Q9FLP3"/>
    </source>
</evidence>
<evidence type="ECO:0000250" key="3">
    <source>
        <dbReference type="UniProtKB" id="Q9HAV7"/>
    </source>
</evidence>
<evidence type="ECO:0000255" key="4"/>
<evidence type="ECO:0000256" key="5">
    <source>
        <dbReference type="SAM" id="MobiDB-lite"/>
    </source>
</evidence>
<evidence type="ECO:0000269" key="6">
    <source>
    </source>
</evidence>
<evidence type="ECO:0000269" key="7">
    <source>
    </source>
</evidence>
<evidence type="ECO:0000303" key="8">
    <source>
    </source>
</evidence>
<evidence type="ECO:0000303" key="9">
    <source>
    </source>
</evidence>
<evidence type="ECO:0000305" key="10"/>
<evidence type="ECO:0000312" key="11">
    <source>
        <dbReference type="Araport" id="AT4G26780"/>
    </source>
</evidence>
<evidence type="ECO:0000312" key="12">
    <source>
        <dbReference type="EMBL" id="CAB36524.1"/>
    </source>
</evidence>
<proteinExistence type="evidence at protein level"/>
<dbReference type="EMBL" id="AL035440">
    <property type="protein sequence ID" value="CAB36524.1"/>
    <property type="status" value="ALT_SEQ"/>
    <property type="molecule type" value="Genomic_DNA"/>
</dbReference>
<dbReference type="EMBL" id="AL161565">
    <property type="protein sequence ID" value="CAB79533.1"/>
    <property type="status" value="ALT_SEQ"/>
    <property type="molecule type" value="Genomic_DNA"/>
</dbReference>
<dbReference type="EMBL" id="CP002687">
    <property type="protein sequence ID" value="AEE85251.1"/>
    <property type="molecule type" value="Genomic_DNA"/>
</dbReference>
<dbReference type="EMBL" id="AK118205">
    <property type="protein sequence ID" value="BAC42827.1"/>
    <property type="molecule type" value="mRNA"/>
</dbReference>
<dbReference type="EMBL" id="BT006047">
    <property type="protein sequence ID" value="AAP04032.1"/>
    <property type="molecule type" value="mRNA"/>
</dbReference>
<dbReference type="EMBL" id="AY087425">
    <property type="protein sequence ID" value="AAM64973.1"/>
    <property type="molecule type" value="mRNA"/>
</dbReference>
<dbReference type="EMBL" id="D88745">
    <property type="protein sequence ID" value="BAA13686.1"/>
    <property type="status" value="ALT_SEQ"/>
    <property type="molecule type" value="mRNA"/>
</dbReference>
<dbReference type="PIR" id="T04801">
    <property type="entry name" value="T04801"/>
</dbReference>
<dbReference type="RefSeq" id="NP_567757.1">
    <property type="nucleotide sequence ID" value="NM_118812.4"/>
</dbReference>
<dbReference type="SMR" id="Q8LB47"/>
<dbReference type="FunCoup" id="Q8LB47">
    <property type="interactions" value="3039"/>
</dbReference>
<dbReference type="IntAct" id="Q8LB47">
    <property type="interactions" value="1"/>
</dbReference>
<dbReference type="STRING" id="3702.Q8LB47"/>
<dbReference type="iPTMnet" id="Q8LB47"/>
<dbReference type="MetOSite" id="Q8LB47"/>
<dbReference type="PaxDb" id="3702-AT4G26780.1"/>
<dbReference type="ProteomicsDB" id="238703"/>
<dbReference type="EnsemblPlants" id="AT4G26780.1">
    <property type="protein sequence ID" value="AT4G26780.1"/>
    <property type="gene ID" value="AT4G26780"/>
</dbReference>
<dbReference type="GeneID" id="828785"/>
<dbReference type="Gramene" id="AT4G26780.1">
    <property type="protein sequence ID" value="AT4G26780.1"/>
    <property type="gene ID" value="AT4G26780"/>
</dbReference>
<dbReference type="KEGG" id="ath:AT4G26780"/>
<dbReference type="Araport" id="AT4G26780"/>
<dbReference type="TAIR" id="AT4G26780">
    <property type="gene designation" value="AR192"/>
</dbReference>
<dbReference type="eggNOG" id="KOG3003">
    <property type="taxonomic scope" value="Eukaryota"/>
</dbReference>
<dbReference type="HOGENOM" id="CLU_057217_1_0_1"/>
<dbReference type="InParanoid" id="Q8LB47"/>
<dbReference type="OMA" id="NARMRHQ"/>
<dbReference type="OrthoDB" id="201635at2759"/>
<dbReference type="PhylomeDB" id="Q8LB47"/>
<dbReference type="PRO" id="PR:Q8LB47"/>
<dbReference type="Proteomes" id="UP000006548">
    <property type="component" value="Chromosome 4"/>
</dbReference>
<dbReference type="ExpressionAtlas" id="Q8LB47">
    <property type="expression patterns" value="baseline and differential"/>
</dbReference>
<dbReference type="GO" id="GO:0005829">
    <property type="term" value="C:cytosol"/>
    <property type="evidence" value="ECO:0007005"/>
    <property type="project" value="TAIR"/>
</dbReference>
<dbReference type="GO" id="GO:0005759">
    <property type="term" value="C:mitochondrial matrix"/>
    <property type="evidence" value="ECO:0007669"/>
    <property type="project" value="UniProtKB-SubCell"/>
</dbReference>
<dbReference type="GO" id="GO:0005739">
    <property type="term" value="C:mitochondrion"/>
    <property type="evidence" value="ECO:0000314"/>
    <property type="project" value="TAIR"/>
</dbReference>
<dbReference type="GO" id="GO:0000774">
    <property type="term" value="F:adenyl-nucleotide exchange factor activity"/>
    <property type="evidence" value="ECO:0007669"/>
    <property type="project" value="InterPro"/>
</dbReference>
<dbReference type="GO" id="GO:0005524">
    <property type="term" value="F:ATP binding"/>
    <property type="evidence" value="ECO:0000250"/>
    <property type="project" value="UniProtKB"/>
</dbReference>
<dbReference type="GO" id="GO:0005507">
    <property type="term" value="F:copper ion binding"/>
    <property type="evidence" value="ECO:0007005"/>
    <property type="project" value="TAIR"/>
</dbReference>
<dbReference type="GO" id="GO:0042803">
    <property type="term" value="F:protein homodimerization activity"/>
    <property type="evidence" value="ECO:0007669"/>
    <property type="project" value="InterPro"/>
</dbReference>
<dbReference type="GO" id="GO:0051087">
    <property type="term" value="F:protein-folding chaperone binding"/>
    <property type="evidence" value="ECO:0007669"/>
    <property type="project" value="InterPro"/>
</dbReference>
<dbReference type="GO" id="GO:0010286">
    <property type="term" value="P:heat acclimation"/>
    <property type="evidence" value="ECO:0000315"/>
    <property type="project" value="UniProtKB"/>
</dbReference>
<dbReference type="GO" id="GO:0006457">
    <property type="term" value="P:protein folding"/>
    <property type="evidence" value="ECO:0007669"/>
    <property type="project" value="InterPro"/>
</dbReference>
<dbReference type="GO" id="GO:0009408">
    <property type="term" value="P:response to heat"/>
    <property type="evidence" value="ECO:0000270"/>
    <property type="project" value="TAIR"/>
</dbReference>
<dbReference type="CDD" id="cd00446">
    <property type="entry name" value="GrpE"/>
    <property type="match status" value="1"/>
</dbReference>
<dbReference type="FunFam" id="2.30.22.10:FF:000002">
    <property type="entry name" value="GrpE protein homolog"/>
    <property type="match status" value="1"/>
</dbReference>
<dbReference type="FunFam" id="3.90.20.20:FF:000005">
    <property type="entry name" value="GrpE protein homolog"/>
    <property type="match status" value="1"/>
</dbReference>
<dbReference type="Gene3D" id="3.90.20.20">
    <property type="match status" value="1"/>
</dbReference>
<dbReference type="Gene3D" id="2.30.22.10">
    <property type="entry name" value="Head domain of nucleotide exchange factor GrpE"/>
    <property type="match status" value="1"/>
</dbReference>
<dbReference type="HAMAP" id="MF_01151">
    <property type="entry name" value="GrpE"/>
    <property type="match status" value="1"/>
</dbReference>
<dbReference type="InterPro" id="IPR000740">
    <property type="entry name" value="GrpE"/>
</dbReference>
<dbReference type="InterPro" id="IPR013805">
    <property type="entry name" value="GrpE_coiled_coil"/>
</dbReference>
<dbReference type="InterPro" id="IPR009012">
    <property type="entry name" value="GrpE_head"/>
</dbReference>
<dbReference type="PANTHER" id="PTHR21237">
    <property type="entry name" value="GRPE PROTEIN"/>
    <property type="match status" value="1"/>
</dbReference>
<dbReference type="PANTHER" id="PTHR21237:SF41">
    <property type="entry name" value="GRPE PROTEIN HOMOLOG 2, MITOCHONDRIAL"/>
    <property type="match status" value="1"/>
</dbReference>
<dbReference type="Pfam" id="PF01025">
    <property type="entry name" value="GrpE"/>
    <property type="match status" value="1"/>
</dbReference>
<dbReference type="PRINTS" id="PR00773">
    <property type="entry name" value="GRPEPROTEIN"/>
</dbReference>
<dbReference type="SUPFAM" id="SSF58014">
    <property type="entry name" value="Coiled-coil domain of nucleotide exchange factor GrpE"/>
    <property type="match status" value="1"/>
</dbReference>
<dbReference type="SUPFAM" id="SSF51064">
    <property type="entry name" value="Head domain of nucleotide exchange factor GrpE"/>
    <property type="match status" value="1"/>
</dbReference>
<dbReference type="PROSITE" id="PS01071">
    <property type="entry name" value="GRPE"/>
    <property type="match status" value="1"/>
</dbReference>
<sequence>MLVLRILSRVTRNAGIRSSLSAVTLPARNQTPVFSSRFHSLAHDFSHKLVPAQMSMMDSFALQRFNFSSSTSPESDEKKTHTEASKTSEEKPTAEANQPGLDSESKDSVTDSAKRKRKGAKGAASSSSESDSESDDDELSADDLVKLVAEKEELLSEKEEEIKQLKDKVLRTYAEMENVMDRTRRDAENTKKYAVQNFAKSLLDVADNLGRASSVVKESFSKLDTSEDSAGAAPLLKTLLEGVEMTEKQLAEVFKKFGMEKYDPINEPFDPNRHNAVFQVPDASKPEGTVAHVLKSGYTLYDRVIRPAEVGVTQGGENQEEKKESDA</sequence>
<organism>
    <name type="scientific">Arabidopsis thaliana</name>
    <name type="common">Mouse-ear cress</name>
    <dbReference type="NCBI Taxonomy" id="3702"/>
    <lineage>
        <taxon>Eukaryota</taxon>
        <taxon>Viridiplantae</taxon>
        <taxon>Streptophyta</taxon>
        <taxon>Embryophyta</taxon>
        <taxon>Tracheophyta</taxon>
        <taxon>Spermatophyta</taxon>
        <taxon>Magnoliopsida</taxon>
        <taxon>eudicotyledons</taxon>
        <taxon>Gunneridae</taxon>
        <taxon>Pentapetalae</taxon>
        <taxon>rosids</taxon>
        <taxon>malvids</taxon>
        <taxon>Brassicales</taxon>
        <taxon>Brassicaceae</taxon>
        <taxon>Camelineae</taxon>
        <taxon>Arabidopsis</taxon>
    </lineage>
</organism>
<name>MGE2_ARATH</name>
<gene>
    <name evidence="8" type="primary">Mge2</name>
    <name evidence="9" type="synonym">AR192</name>
    <name evidence="11" type="ordered locus">At4g26780</name>
    <name evidence="12" type="ORF">F10M23.120</name>
</gene>
<protein>
    <recommendedName>
        <fullName evidence="8">GrpE protein homolog 2, mitochondrial</fullName>
    </recommendedName>
</protein>
<comment type="function">
    <text evidence="1 2 3 6 7">Essential component of the PAM complex, a complex required for the translocation of transit peptide-containing proteins from the inner membrane into the mitochondrial matrix in an ATP-dependent manner (By similarity). Seems to control the nucleotide-dependent binding of mitochondrial HSP70 to substrate proteins (By similarity). Binds ATP (By similarity). Interacts with copper ions Cu(2+) (PubMed:20018591). Confers thermotolerance to long-term exposure at moderately high temperature (TMHT at 35 degrees Celsius) (PubMed:22128139).</text>
</comment>
<comment type="subunit">
    <text evidence="1">Probable component of the PAM complex, at least composed of SSC1 (mtHsp70), MGE1, TIM44, PAM16/TIM16, PAM17 and PAM18/TIM14. Interacts with SSQ1.</text>
</comment>
<comment type="subcellular location">
    <subcellularLocation>
        <location evidence="7">Mitochondrion matrix</location>
    </subcellularLocation>
</comment>
<comment type="induction">
    <text evidence="7">Induced by heat treatment at 38 degrees Celsius in a HSFA1-dependent manner (at protein level).</text>
</comment>
<comment type="disruption phenotype">
    <text evidence="7">No visible phenotype in normal conditions. Defective for thermotolerance to moderately high temperature (TMHT at 35 degrees Celsius), but normal basal thermotolerance (BT), short-term acquired thermotolerance (SAT) and long-term acquired thermotolerance (LAT) at 37 and 44 degrees Celsius.</text>
</comment>
<comment type="similarity">
    <text evidence="10">Belongs to the GrpE family.</text>
</comment>
<comment type="sequence caution" evidence="10">
    <conflict type="erroneous initiation">
        <sequence resource="EMBL-CDS" id="BAA13686"/>
    </conflict>
    <text>Truncated N-terminus.</text>
</comment>
<comment type="sequence caution" evidence="10">
    <conflict type="frameshift">
        <sequence resource="EMBL-CDS" id="BAA13686"/>
    </conflict>
</comment>
<comment type="sequence caution" evidence="10">
    <conflict type="erroneous gene model prediction">
        <sequence resource="EMBL-CDS" id="CAB36524"/>
    </conflict>
</comment>
<comment type="sequence caution" evidence="10">
    <conflict type="erroneous gene model prediction">
        <sequence resource="EMBL-CDS" id="CAB79533"/>
    </conflict>
</comment>
<feature type="transit peptide" description="Mitochondrion" evidence="4">
    <location>
        <begin position="1"/>
        <end position="39"/>
    </location>
</feature>
<feature type="chain" id="PRO_0000441900" description="GrpE protein homolog 2, mitochondrial">
    <location>
        <begin position="40"/>
        <end position="327"/>
    </location>
</feature>
<feature type="region of interest" description="Disordered" evidence="5">
    <location>
        <begin position="68"/>
        <end position="140"/>
    </location>
</feature>
<feature type="compositionally biased region" description="Basic and acidic residues" evidence="5">
    <location>
        <begin position="75"/>
        <end position="93"/>
    </location>
</feature>
<feature type="compositionally biased region" description="Basic and acidic residues" evidence="5">
    <location>
        <begin position="103"/>
        <end position="113"/>
    </location>
</feature>
<feature type="compositionally biased region" description="Acidic residues" evidence="5">
    <location>
        <begin position="130"/>
        <end position="140"/>
    </location>
</feature>
<reference key="1">
    <citation type="journal article" date="1999" name="Nature">
        <title>Sequence and analysis of chromosome 4 of the plant Arabidopsis thaliana.</title>
        <authorList>
            <person name="Mayer K.F.X."/>
            <person name="Schueller C."/>
            <person name="Wambutt R."/>
            <person name="Murphy G."/>
            <person name="Volckaert G."/>
            <person name="Pohl T."/>
            <person name="Duesterhoeft A."/>
            <person name="Stiekema W."/>
            <person name="Entian K.-D."/>
            <person name="Terryn N."/>
            <person name="Harris B."/>
            <person name="Ansorge W."/>
            <person name="Brandt P."/>
            <person name="Grivell L.A."/>
            <person name="Rieger M."/>
            <person name="Weichselgartner M."/>
            <person name="de Simone V."/>
            <person name="Obermaier B."/>
            <person name="Mache R."/>
            <person name="Mueller M."/>
            <person name="Kreis M."/>
            <person name="Delseny M."/>
            <person name="Puigdomenech P."/>
            <person name="Watson M."/>
            <person name="Schmidtheini T."/>
            <person name="Reichert B."/>
            <person name="Portetelle D."/>
            <person name="Perez-Alonso M."/>
            <person name="Boutry M."/>
            <person name="Bancroft I."/>
            <person name="Vos P."/>
            <person name="Hoheisel J."/>
            <person name="Zimmermann W."/>
            <person name="Wedler H."/>
            <person name="Ridley P."/>
            <person name="Langham S.-A."/>
            <person name="McCullagh B."/>
            <person name="Bilham L."/>
            <person name="Robben J."/>
            <person name="van der Schueren J."/>
            <person name="Grymonprez B."/>
            <person name="Chuang Y.-J."/>
            <person name="Vandenbussche F."/>
            <person name="Braeken M."/>
            <person name="Weltjens I."/>
            <person name="Voet M."/>
            <person name="Bastiaens I."/>
            <person name="Aert R."/>
            <person name="Defoor E."/>
            <person name="Weitzenegger T."/>
            <person name="Bothe G."/>
            <person name="Ramsperger U."/>
            <person name="Hilbert H."/>
            <person name="Braun M."/>
            <person name="Holzer E."/>
            <person name="Brandt A."/>
            <person name="Peters S."/>
            <person name="van Staveren M."/>
            <person name="Dirkse W."/>
            <person name="Mooijman P."/>
            <person name="Klein Lankhorst R."/>
            <person name="Rose M."/>
            <person name="Hauf J."/>
            <person name="Koetter P."/>
            <person name="Berneiser S."/>
            <person name="Hempel S."/>
            <person name="Feldpausch M."/>
            <person name="Lamberth S."/>
            <person name="Van den Daele H."/>
            <person name="De Keyser A."/>
            <person name="Buysshaert C."/>
            <person name="Gielen J."/>
            <person name="Villarroel R."/>
            <person name="De Clercq R."/>
            <person name="van Montagu M."/>
            <person name="Rogers J."/>
            <person name="Cronin A."/>
            <person name="Quail M.A."/>
            <person name="Bray-Allen S."/>
            <person name="Clark L."/>
            <person name="Doggett J."/>
            <person name="Hall S."/>
            <person name="Kay M."/>
            <person name="Lennard N."/>
            <person name="McLay K."/>
            <person name="Mayes R."/>
            <person name="Pettett A."/>
            <person name="Rajandream M.A."/>
            <person name="Lyne M."/>
            <person name="Benes V."/>
            <person name="Rechmann S."/>
            <person name="Borkova D."/>
            <person name="Bloecker H."/>
            <person name="Scharfe M."/>
            <person name="Grimm M."/>
            <person name="Loehnert T.-H."/>
            <person name="Dose S."/>
            <person name="de Haan M."/>
            <person name="Maarse A.C."/>
            <person name="Schaefer M."/>
            <person name="Mueller-Auer S."/>
            <person name="Gabel C."/>
            <person name="Fuchs M."/>
            <person name="Fartmann B."/>
            <person name="Granderath K."/>
            <person name="Dauner D."/>
            <person name="Herzl A."/>
            <person name="Neumann S."/>
            <person name="Argiriou A."/>
            <person name="Vitale D."/>
            <person name="Liguori R."/>
            <person name="Piravandi E."/>
            <person name="Massenet O."/>
            <person name="Quigley F."/>
            <person name="Clabauld G."/>
            <person name="Muendlein A."/>
            <person name="Felber R."/>
            <person name="Schnabl S."/>
            <person name="Hiller R."/>
            <person name="Schmidt W."/>
            <person name="Lecharny A."/>
            <person name="Aubourg S."/>
            <person name="Chefdor F."/>
            <person name="Cooke R."/>
            <person name="Berger C."/>
            <person name="Monfort A."/>
            <person name="Casacuberta E."/>
            <person name="Gibbons T."/>
            <person name="Weber N."/>
            <person name="Vandenbol M."/>
            <person name="Bargues M."/>
            <person name="Terol J."/>
            <person name="Torres A."/>
            <person name="Perez-Perez A."/>
            <person name="Purnelle B."/>
            <person name="Bent E."/>
            <person name="Johnson S."/>
            <person name="Tacon D."/>
            <person name="Jesse T."/>
            <person name="Heijnen L."/>
            <person name="Schwarz S."/>
            <person name="Scholler P."/>
            <person name="Heber S."/>
            <person name="Francs P."/>
            <person name="Bielke C."/>
            <person name="Frishman D."/>
            <person name="Haase D."/>
            <person name="Lemcke K."/>
            <person name="Mewes H.-W."/>
            <person name="Stocker S."/>
            <person name="Zaccaria P."/>
            <person name="Bevan M."/>
            <person name="Wilson R.K."/>
            <person name="de la Bastide M."/>
            <person name="Habermann K."/>
            <person name="Parnell L."/>
            <person name="Dedhia N."/>
            <person name="Gnoj L."/>
            <person name="Schutz K."/>
            <person name="Huang E."/>
            <person name="Spiegel L."/>
            <person name="Sekhon M."/>
            <person name="Murray J."/>
            <person name="Sheet P."/>
            <person name="Cordes M."/>
            <person name="Abu-Threideh J."/>
            <person name="Stoneking T."/>
            <person name="Kalicki J."/>
            <person name="Graves T."/>
            <person name="Harmon G."/>
            <person name="Edwards J."/>
            <person name="Latreille P."/>
            <person name="Courtney L."/>
            <person name="Cloud J."/>
            <person name="Abbott A."/>
            <person name="Scott K."/>
            <person name="Johnson D."/>
            <person name="Minx P."/>
            <person name="Bentley D."/>
            <person name="Fulton B."/>
            <person name="Miller N."/>
            <person name="Greco T."/>
            <person name="Kemp K."/>
            <person name="Kramer J."/>
            <person name="Fulton L."/>
            <person name="Mardis E."/>
            <person name="Dante M."/>
            <person name="Pepin K."/>
            <person name="Hillier L.W."/>
            <person name="Nelson J."/>
            <person name="Spieth J."/>
            <person name="Ryan E."/>
            <person name="Andrews S."/>
            <person name="Geisel C."/>
            <person name="Layman D."/>
            <person name="Du H."/>
            <person name="Ali J."/>
            <person name="Berghoff A."/>
            <person name="Jones K."/>
            <person name="Drone K."/>
            <person name="Cotton M."/>
            <person name="Joshu C."/>
            <person name="Antonoiu B."/>
            <person name="Zidanic M."/>
            <person name="Strong C."/>
            <person name="Sun H."/>
            <person name="Lamar B."/>
            <person name="Yordan C."/>
            <person name="Ma P."/>
            <person name="Zhong J."/>
            <person name="Preston R."/>
            <person name="Vil D."/>
            <person name="Shekher M."/>
            <person name="Matero A."/>
            <person name="Shah R."/>
            <person name="Swaby I.K."/>
            <person name="O'Shaughnessy A."/>
            <person name="Rodriguez M."/>
            <person name="Hoffman J."/>
            <person name="Till S."/>
            <person name="Granat S."/>
            <person name="Shohdy N."/>
            <person name="Hasegawa A."/>
            <person name="Hameed A."/>
            <person name="Lodhi M."/>
            <person name="Johnson A."/>
            <person name="Chen E."/>
            <person name="Marra M.A."/>
            <person name="Martienssen R."/>
            <person name="McCombie W.R."/>
        </authorList>
    </citation>
    <scope>NUCLEOTIDE SEQUENCE [LARGE SCALE GENOMIC DNA]</scope>
    <source>
        <strain>cv. Columbia</strain>
    </source>
</reference>
<reference key="2">
    <citation type="journal article" date="2017" name="Plant J.">
        <title>Araport11: a complete reannotation of the Arabidopsis thaliana reference genome.</title>
        <authorList>
            <person name="Cheng C.Y."/>
            <person name="Krishnakumar V."/>
            <person name="Chan A.P."/>
            <person name="Thibaud-Nissen F."/>
            <person name="Schobel S."/>
            <person name="Town C.D."/>
        </authorList>
    </citation>
    <scope>GENOME REANNOTATION</scope>
    <source>
        <strain>cv. Columbia</strain>
    </source>
</reference>
<reference key="3">
    <citation type="journal article" date="2002" name="Science">
        <title>Functional annotation of a full-length Arabidopsis cDNA collection.</title>
        <authorList>
            <person name="Seki M."/>
            <person name="Narusaka M."/>
            <person name="Kamiya A."/>
            <person name="Ishida J."/>
            <person name="Satou M."/>
            <person name="Sakurai T."/>
            <person name="Nakajima M."/>
            <person name="Enju A."/>
            <person name="Akiyama K."/>
            <person name="Oono Y."/>
            <person name="Muramatsu M."/>
            <person name="Hayashizaki Y."/>
            <person name="Kawai J."/>
            <person name="Carninci P."/>
            <person name="Itoh M."/>
            <person name="Ishii Y."/>
            <person name="Arakawa T."/>
            <person name="Shibata K."/>
            <person name="Shinagawa A."/>
            <person name="Shinozaki K."/>
        </authorList>
    </citation>
    <scope>NUCLEOTIDE SEQUENCE [LARGE SCALE MRNA]</scope>
    <source>
        <strain>cv. Columbia</strain>
    </source>
</reference>
<reference key="4">
    <citation type="journal article" date="2003" name="Science">
        <title>Empirical analysis of transcriptional activity in the Arabidopsis genome.</title>
        <authorList>
            <person name="Yamada K."/>
            <person name="Lim J."/>
            <person name="Dale J.M."/>
            <person name="Chen H."/>
            <person name="Shinn P."/>
            <person name="Palm C.J."/>
            <person name="Southwick A.M."/>
            <person name="Wu H.C."/>
            <person name="Kim C.J."/>
            <person name="Nguyen M."/>
            <person name="Pham P.K."/>
            <person name="Cheuk R.F."/>
            <person name="Karlin-Newmann G."/>
            <person name="Liu S.X."/>
            <person name="Lam B."/>
            <person name="Sakano H."/>
            <person name="Wu T."/>
            <person name="Yu G."/>
            <person name="Miranda M."/>
            <person name="Quach H.L."/>
            <person name="Tripp M."/>
            <person name="Chang C.H."/>
            <person name="Lee J.M."/>
            <person name="Toriumi M.J."/>
            <person name="Chan M.M."/>
            <person name="Tang C.C."/>
            <person name="Onodera C.S."/>
            <person name="Deng J.M."/>
            <person name="Akiyama K."/>
            <person name="Ansari Y."/>
            <person name="Arakawa T."/>
            <person name="Banh J."/>
            <person name="Banno F."/>
            <person name="Bowser L."/>
            <person name="Brooks S.Y."/>
            <person name="Carninci P."/>
            <person name="Chao Q."/>
            <person name="Choy N."/>
            <person name="Enju A."/>
            <person name="Goldsmith A.D."/>
            <person name="Gurjal M."/>
            <person name="Hansen N.F."/>
            <person name="Hayashizaki Y."/>
            <person name="Johnson-Hopson C."/>
            <person name="Hsuan V.W."/>
            <person name="Iida K."/>
            <person name="Karnes M."/>
            <person name="Khan S."/>
            <person name="Koesema E."/>
            <person name="Ishida J."/>
            <person name="Jiang P.X."/>
            <person name="Jones T."/>
            <person name="Kawai J."/>
            <person name="Kamiya A."/>
            <person name="Meyers C."/>
            <person name="Nakajima M."/>
            <person name="Narusaka M."/>
            <person name="Seki M."/>
            <person name="Sakurai T."/>
            <person name="Satou M."/>
            <person name="Tamse R."/>
            <person name="Vaysberg M."/>
            <person name="Wallender E.K."/>
            <person name="Wong C."/>
            <person name="Yamamura Y."/>
            <person name="Yuan S."/>
            <person name="Shinozaki K."/>
            <person name="Davis R.W."/>
            <person name="Theologis A."/>
            <person name="Ecker J.R."/>
        </authorList>
    </citation>
    <scope>NUCLEOTIDE SEQUENCE [LARGE SCALE MRNA]</scope>
    <source>
        <strain>cv. Columbia</strain>
    </source>
</reference>
<reference key="5">
    <citation type="submission" date="2002-03" db="EMBL/GenBank/DDBJ databases">
        <title>Full-length cDNA from Arabidopsis thaliana.</title>
        <authorList>
            <person name="Brover V.V."/>
            <person name="Troukhan M.E."/>
            <person name="Alexandrov N.A."/>
            <person name="Lu Y.-P."/>
            <person name="Flavell R.B."/>
            <person name="Feldmann K.A."/>
        </authorList>
    </citation>
    <scope>NUCLEOTIDE SEQUENCE [LARGE SCALE MRNA]</scope>
</reference>
<reference key="6">
    <citation type="journal article" date="1997" name="FEBS Lett.">
        <title>Functional cloning of a cDNA encoding Mei2-like protein from Arabidopsis thaliana using a fission yeast pheromone receptor deficient mutant.</title>
        <authorList>
            <person name="Hirayama T."/>
            <person name="Ishida C."/>
            <person name="Kuromori T."/>
            <person name="Obata S."/>
            <person name="Shimoda C."/>
            <person name="Yamamoto M."/>
            <person name="Shinozaki K."/>
            <person name="Ohto C."/>
        </authorList>
    </citation>
    <scope>NUCLEOTIDE SEQUENCE [MRNA] OF 43-327</scope>
</reference>
<reference key="7">
    <citation type="journal article" date="2010" name="Plant Physiol.">
        <title>Divalent metal ions in plant mitochondria and their role in interactions with proteins and oxidative stress-induced damage to respiratory function.</title>
        <authorList>
            <person name="Tan Y.-F."/>
            <person name="O'Toole N."/>
            <person name="Taylor N.L."/>
            <person name="Millar A.H."/>
        </authorList>
    </citation>
    <scope>FUNCTION</scope>
    <source>
        <strain>cv. Landsberg erecta</strain>
    </source>
</reference>
<reference key="8">
    <citation type="journal article" date="2012" name="Plant Physiol.">
        <title>Recent gene duplication and subfunctionalization produced a mitochondrial GrpE, the nucleotide exchange factor of the Hsp70 complex, specialized in thermotolerance to chronic heat stress in Arabidopsis.</title>
        <authorList>
            <person name="Hu C."/>
            <person name="Lin S.Y."/>
            <person name="Chi W.T."/>
            <person name="Charng Y.Y."/>
        </authorList>
    </citation>
    <scope>FUNCTION</scope>
    <scope>DISRUPTION PHENOTYPE</scope>
    <scope>INDUCTION BY HEAT</scope>
    <scope>SUBCELLULAR LOCATION</scope>
    <scope>GENE FAMILY</scope>
    <scope>NOMENCLATURE</scope>
    <source>
        <strain>cv. Columbia</strain>
    </source>
</reference>
<keyword id="KW-0067">ATP-binding</keyword>
<keyword id="KW-0143">Chaperone</keyword>
<keyword id="KW-0186">Copper</keyword>
<keyword id="KW-0479">Metal-binding</keyword>
<keyword id="KW-0496">Mitochondrion</keyword>
<keyword id="KW-0547">Nucleotide-binding</keyword>
<keyword id="KW-1185">Reference proteome</keyword>
<keyword id="KW-0346">Stress response</keyword>
<keyword id="KW-0809">Transit peptide</keyword>
<accession>Q8LB47</accession>
<accession>Q96515</accession>
<accession>Q9SZ18</accession>